<keyword id="KW-0963">Cytoplasm</keyword>
<keyword id="KW-0704">Schiff base</keyword>
<keyword id="KW-0784">Thiamine biosynthesis</keyword>
<keyword id="KW-0808">Transferase</keyword>
<feature type="chain" id="PRO_1000196895" description="Thiazole synthase">
    <location>
        <begin position="1"/>
        <end position="256"/>
    </location>
</feature>
<feature type="active site" description="Schiff-base intermediate with DXP" evidence="1">
    <location>
        <position position="95"/>
    </location>
</feature>
<feature type="binding site" evidence="1">
    <location>
        <position position="156"/>
    </location>
    <ligand>
        <name>1-deoxy-D-xylulose 5-phosphate</name>
        <dbReference type="ChEBI" id="CHEBI:57792"/>
    </ligand>
</feature>
<feature type="binding site" evidence="1">
    <location>
        <begin position="182"/>
        <end position="183"/>
    </location>
    <ligand>
        <name>1-deoxy-D-xylulose 5-phosphate</name>
        <dbReference type="ChEBI" id="CHEBI:57792"/>
    </ligand>
</feature>
<feature type="binding site" evidence="1">
    <location>
        <begin position="204"/>
        <end position="205"/>
    </location>
    <ligand>
        <name>1-deoxy-D-xylulose 5-phosphate</name>
        <dbReference type="ChEBI" id="CHEBI:57792"/>
    </ligand>
</feature>
<organism>
    <name type="scientific">Salmonella paratyphi A (strain AKU_12601)</name>
    <dbReference type="NCBI Taxonomy" id="554290"/>
    <lineage>
        <taxon>Bacteria</taxon>
        <taxon>Pseudomonadati</taxon>
        <taxon>Pseudomonadota</taxon>
        <taxon>Gammaproteobacteria</taxon>
        <taxon>Enterobacterales</taxon>
        <taxon>Enterobacteriaceae</taxon>
        <taxon>Salmonella</taxon>
    </lineage>
</organism>
<comment type="function">
    <text evidence="1">Catalyzes the rearrangement of 1-deoxy-D-xylulose 5-phosphate (DXP) to produce the thiazole phosphate moiety of thiamine. Sulfur is provided by the thiocarboxylate moiety of the carrier protein ThiS. In vitro, sulfur can be provided by H(2)S.</text>
</comment>
<comment type="catalytic activity">
    <reaction evidence="1">
        <text>[ThiS sulfur-carrier protein]-C-terminal-Gly-aminoethanethioate + 2-iminoacetate + 1-deoxy-D-xylulose 5-phosphate = [ThiS sulfur-carrier protein]-C-terminal Gly-Gly + 2-[(2R,5Z)-2-carboxy-4-methylthiazol-5(2H)-ylidene]ethyl phosphate + 2 H2O + H(+)</text>
        <dbReference type="Rhea" id="RHEA:26297"/>
        <dbReference type="Rhea" id="RHEA-COMP:12909"/>
        <dbReference type="Rhea" id="RHEA-COMP:19908"/>
        <dbReference type="ChEBI" id="CHEBI:15377"/>
        <dbReference type="ChEBI" id="CHEBI:15378"/>
        <dbReference type="ChEBI" id="CHEBI:57792"/>
        <dbReference type="ChEBI" id="CHEBI:62899"/>
        <dbReference type="ChEBI" id="CHEBI:77846"/>
        <dbReference type="ChEBI" id="CHEBI:90778"/>
        <dbReference type="ChEBI" id="CHEBI:232372"/>
        <dbReference type="EC" id="2.8.1.10"/>
    </reaction>
</comment>
<comment type="pathway">
    <text evidence="1">Cofactor biosynthesis; thiamine diphosphate biosynthesis.</text>
</comment>
<comment type="subunit">
    <text evidence="1">Homotetramer. Forms heterodimers with either ThiH or ThiS.</text>
</comment>
<comment type="subcellular location">
    <subcellularLocation>
        <location evidence="1">Cytoplasm</location>
    </subcellularLocation>
</comment>
<comment type="similarity">
    <text evidence="1">Belongs to the ThiG family.</text>
</comment>
<name>THIG_SALPK</name>
<gene>
    <name evidence="1" type="primary">thiG</name>
    <name type="ordered locus">SSPA3712</name>
</gene>
<proteinExistence type="inferred from homology"/>
<evidence type="ECO:0000255" key="1">
    <source>
        <dbReference type="HAMAP-Rule" id="MF_00443"/>
    </source>
</evidence>
<dbReference type="EC" id="2.8.1.10" evidence="1"/>
<dbReference type="EMBL" id="FM200053">
    <property type="protein sequence ID" value="CAR61995.1"/>
    <property type="molecule type" value="Genomic_DNA"/>
</dbReference>
<dbReference type="RefSeq" id="WP_000944070.1">
    <property type="nucleotide sequence ID" value="NC_011147.1"/>
</dbReference>
<dbReference type="SMR" id="B5BJQ9"/>
<dbReference type="KEGG" id="sek:SSPA3712"/>
<dbReference type="HOGENOM" id="CLU_062233_1_0_6"/>
<dbReference type="UniPathway" id="UPA00060"/>
<dbReference type="Proteomes" id="UP000001869">
    <property type="component" value="Chromosome"/>
</dbReference>
<dbReference type="GO" id="GO:0005737">
    <property type="term" value="C:cytoplasm"/>
    <property type="evidence" value="ECO:0007669"/>
    <property type="project" value="UniProtKB-SubCell"/>
</dbReference>
<dbReference type="GO" id="GO:1990107">
    <property type="term" value="F:thiazole synthase activity"/>
    <property type="evidence" value="ECO:0007669"/>
    <property type="project" value="UniProtKB-EC"/>
</dbReference>
<dbReference type="GO" id="GO:0009229">
    <property type="term" value="P:thiamine diphosphate biosynthetic process"/>
    <property type="evidence" value="ECO:0007669"/>
    <property type="project" value="UniProtKB-UniRule"/>
</dbReference>
<dbReference type="CDD" id="cd04728">
    <property type="entry name" value="ThiG"/>
    <property type="match status" value="1"/>
</dbReference>
<dbReference type="FunFam" id="3.20.20.70:FF:000049">
    <property type="entry name" value="Thiazole synthase"/>
    <property type="match status" value="1"/>
</dbReference>
<dbReference type="Gene3D" id="3.20.20.70">
    <property type="entry name" value="Aldolase class I"/>
    <property type="match status" value="1"/>
</dbReference>
<dbReference type="HAMAP" id="MF_00443">
    <property type="entry name" value="ThiG"/>
    <property type="match status" value="1"/>
</dbReference>
<dbReference type="InterPro" id="IPR013785">
    <property type="entry name" value="Aldolase_TIM"/>
</dbReference>
<dbReference type="InterPro" id="IPR033983">
    <property type="entry name" value="Thiazole_synthase_ThiG"/>
</dbReference>
<dbReference type="InterPro" id="IPR008867">
    <property type="entry name" value="ThiG"/>
</dbReference>
<dbReference type="PANTHER" id="PTHR34266">
    <property type="entry name" value="THIAZOLE SYNTHASE"/>
    <property type="match status" value="1"/>
</dbReference>
<dbReference type="PANTHER" id="PTHR34266:SF2">
    <property type="entry name" value="THIAZOLE SYNTHASE"/>
    <property type="match status" value="1"/>
</dbReference>
<dbReference type="Pfam" id="PF05690">
    <property type="entry name" value="ThiG"/>
    <property type="match status" value="1"/>
</dbReference>
<dbReference type="SUPFAM" id="SSF110399">
    <property type="entry name" value="ThiG-like"/>
    <property type="match status" value="1"/>
</dbReference>
<sequence>MLRIADKTFDSHLFTGTGKFASSQLMVEAIRASGSQLVTLAMKRVDLRQHNDAILAPLIEAGVTLLPNTSGAKTAEEAIFAAQLAREALGTHWLKLEIHPDARWLLPDPIETLKAAEALVKQGFVVLPYCGADPVLCKRLEEVGCAAVMPLGAPIGSNQGLETKAMLEIIIQQATVPVVVDAGIGVPSHATQALEMGADAVLVNTAIAVADNPVMMATAFRLAVEAGLLARQAVPGNRSTYASATSPLTGFLEALA</sequence>
<accession>B5BJQ9</accession>
<reference key="1">
    <citation type="journal article" date="2009" name="BMC Genomics">
        <title>Pseudogene accumulation in the evolutionary histories of Salmonella enterica serovars Paratyphi A and Typhi.</title>
        <authorList>
            <person name="Holt K.E."/>
            <person name="Thomson N.R."/>
            <person name="Wain J."/>
            <person name="Langridge G.C."/>
            <person name="Hasan R."/>
            <person name="Bhutta Z.A."/>
            <person name="Quail M.A."/>
            <person name="Norbertczak H."/>
            <person name="Walker D."/>
            <person name="Simmonds M."/>
            <person name="White B."/>
            <person name="Bason N."/>
            <person name="Mungall K."/>
            <person name="Dougan G."/>
            <person name="Parkhill J."/>
        </authorList>
    </citation>
    <scope>NUCLEOTIDE SEQUENCE [LARGE SCALE GENOMIC DNA]</scope>
    <source>
        <strain>AKU_12601</strain>
    </source>
</reference>
<protein>
    <recommendedName>
        <fullName evidence="1">Thiazole synthase</fullName>
        <ecNumber evidence="1">2.8.1.10</ecNumber>
    </recommendedName>
</protein>